<keyword id="KW-0027">Amidation</keyword>
<keyword id="KW-0119">Carbohydrate metabolism</keyword>
<keyword id="KW-0208">D-amino acid</keyword>
<keyword id="KW-0903">Direct protein sequencing</keyword>
<keyword id="KW-1015">Disulfide bond</keyword>
<keyword id="KW-0313">Glucose metabolism</keyword>
<keyword id="KW-0372">Hormone</keyword>
<keyword id="KW-0527">Neuropeptide</keyword>
<keyword id="KW-0873">Pyrrolidone carboxylic acid</keyword>
<keyword id="KW-0964">Secreted</keyword>
<accession>P83486</accession>
<name>CHHB_CHEDE</name>
<comment type="function">
    <text>Hormone found in the sinus gland of isopods and decapods which controls the blood sugar level. Has a secretagogue action over the amylase released from the midgut gland. May act as a stress hormone and may be involved in the control of molting and reproduction.</text>
</comment>
<comment type="subcellular location">
    <subcellularLocation>
        <location>Secreted</location>
    </subcellularLocation>
</comment>
<comment type="PTM">
    <text evidence="2">Stereoinversion of L-Phe (in CHHB-I) to D-Phe (in CHHB-II).</text>
</comment>
<comment type="mass spectrometry" mass="8370.34" method="Electrospray" evidence="2"/>
<comment type="similarity">
    <text evidence="3">Belongs to the arthropod CHH/MIH/GIH/VIH hormone family.</text>
</comment>
<reference key="1">
    <citation type="journal article" date="2003" name="Peptides">
        <title>Two genetic variants of the crustacean hyperglycemic hormone (CHH) from the Australian crayfish, Cherax destructor: detection of chiral isoforms due to posttranslational modification.</title>
        <authorList>
            <person name="Bulau P."/>
            <person name="Meisen I."/>
            <person name="Reichwein-Roderburg B."/>
            <person name="Peter-Katalinic J."/>
            <person name="Keller R."/>
        </authorList>
    </citation>
    <scope>PROTEIN SEQUENCE</scope>
    <scope>MASS SPECTROMETRY</scope>
    <scope>PYROGLUTAMATE FORMATION AT GLN-1</scope>
    <scope>D-AMINO ACID AT PHE-3</scope>
    <scope>AMIDATION AT VAL-72</scope>
    <source>
        <tissue>Sinus gland</tissue>
    </source>
</reference>
<proteinExistence type="evidence at protein level"/>
<organism evidence="3">
    <name type="scientific">Cherax destructor</name>
    <name type="common">Common yabby crayfish</name>
    <dbReference type="NCBI Taxonomy" id="6723"/>
    <lineage>
        <taxon>Eukaryota</taxon>
        <taxon>Metazoa</taxon>
        <taxon>Ecdysozoa</taxon>
        <taxon>Arthropoda</taxon>
        <taxon>Crustacea</taxon>
        <taxon>Multicrustacea</taxon>
        <taxon>Malacostraca</taxon>
        <taxon>Eumalacostraca</taxon>
        <taxon>Eucarida</taxon>
        <taxon>Decapoda</taxon>
        <taxon>Pleocyemata</taxon>
        <taxon>Astacidea</taxon>
        <taxon>Parastacoidea</taxon>
        <taxon>Parastacidae</taxon>
        <taxon>Cherax</taxon>
    </lineage>
</organism>
<sequence length="72" mass="8395">QVFDQACKGVYDRAIFKKLDRVCDDCYNLYRKPYVATSCRQNCYSNLVFRQCLDDLLLVDVVDEYVSGVQIV</sequence>
<protein>
    <recommendedName>
        <fullName>Crustacean hyperglycemic hormone B</fullName>
        <shortName>CHHB</shortName>
    </recommendedName>
</protein>
<feature type="chain" id="PRO_0000209856" description="Crustacean hyperglycemic hormone B">
    <location>
        <begin position="1"/>
        <end position="72"/>
    </location>
</feature>
<feature type="modified residue" description="Pyrrolidone carboxylic acid" evidence="2">
    <location>
        <position position="1"/>
    </location>
</feature>
<feature type="modified residue" description="D-phenylalanine; in form CHHB-II" evidence="2">
    <location>
        <position position="3"/>
    </location>
</feature>
<feature type="modified residue" description="Valine amide" evidence="2">
    <location>
        <position position="72"/>
    </location>
</feature>
<feature type="disulfide bond" evidence="1">
    <location>
        <begin position="7"/>
        <end position="43"/>
    </location>
</feature>
<feature type="disulfide bond" evidence="1">
    <location>
        <begin position="23"/>
        <end position="39"/>
    </location>
</feature>
<feature type="disulfide bond" evidence="1">
    <location>
        <begin position="26"/>
        <end position="52"/>
    </location>
</feature>
<evidence type="ECO:0000250" key="1"/>
<evidence type="ECO:0000269" key="2">
    <source>
    </source>
</evidence>
<evidence type="ECO:0000305" key="3"/>
<dbReference type="SMR" id="P83486"/>
<dbReference type="GO" id="GO:0005576">
    <property type="term" value="C:extracellular region"/>
    <property type="evidence" value="ECO:0007669"/>
    <property type="project" value="UniProtKB-SubCell"/>
</dbReference>
<dbReference type="GO" id="GO:0005184">
    <property type="term" value="F:neuropeptide hormone activity"/>
    <property type="evidence" value="ECO:0007669"/>
    <property type="project" value="InterPro"/>
</dbReference>
<dbReference type="GO" id="GO:0007623">
    <property type="term" value="P:circadian rhythm"/>
    <property type="evidence" value="ECO:0007669"/>
    <property type="project" value="TreeGrafter"/>
</dbReference>
<dbReference type="GO" id="GO:0006006">
    <property type="term" value="P:glucose metabolic process"/>
    <property type="evidence" value="ECO:0007669"/>
    <property type="project" value="UniProtKB-KW"/>
</dbReference>
<dbReference type="GO" id="GO:0007218">
    <property type="term" value="P:neuropeptide signaling pathway"/>
    <property type="evidence" value="ECO:0007669"/>
    <property type="project" value="UniProtKB-KW"/>
</dbReference>
<dbReference type="Gene3D" id="1.10.2010.10">
    <property type="entry name" value="Crustacean CHH/MIH/GIH neurohormone"/>
    <property type="match status" value="1"/>
</dbReference>
<dbReference type="InterPro" id="IPR018251">
    <property type="entry name" value="Crust_neurhormone_CS"/>
</dbReference>
<dbReference type="InterPro" id="IPR031098">
    <property type="entry name" value="Crust_neurohorm"/>
</dbReference>
<dbReference type="InterPro" id="IPR035957">
    <property type="entry name" value="Crust_neurohorm_sf"/>
</dbReference>
<dbReference type="InterPro" id="IPR001166">
    <property type="entry name" value="Hyperglycemic"/>
</dbReference>
<dbReference type="InterPro" id="IPR000346">
    <property type="entry name" value="Hyperglycemic1"/>
</dbReference>
<dbReference type="PANTHER" id="PTHR35981">
    <property type="entry name" value="ION TRANSPORT PEPTIDE, ISOFORM C"/>
    <property type="match status" value="1"/>
</dbReference>
<dbReference type="PANTHER" id="PTHR35981:SF2">
    <property type="entry name" value="ION TRANSPORT PEPTIDE, ISOFORM C"/>
    <property type="match status" value="1"/>
</dbReference>
<dbReference type="Pfam" id="PF01147">
    <property type="entry name" value="Crust_neurohorm"/>
    <property type="match status" value="1"/>
</dbReference>
<dbReference type="PRINTS" id="PR00548">
    <property type="entry name" value="HYPRGLYCEMC1"/>
</dbReference>
<dbReference type="PRINTS" id="PR00550">
    <property type="entry name" value="HYPRGLYCEMIC"/>
</dbReference>
<dbReference type="SUPFAM" id="SSF81778">
    <property type="entry name" value="Crustacean CHH/MIH/GIH neurohormone"/>
    <property type="match status" value="1"/>
</dbReference>
<dbReference type="PROSITE" id="PS01250">
    <property type="entry name" value="CHH_MIH_GIH"/>
    <property type="match status" value="1"/>
</dbReference>